<proteinExistence type="inferred from homology"/>
<name>CLPP_YERPP</name>
<sequence>MSYSGERDQFAPNMALVPMVVEQTSRGERSYDIFSRLLKERIIFLTGQVEDHMANLITAQMLFLEAENPEKDIFLYINSPGGVITAGMSIYDTMQFIKPDVSTICMGQACSMGAFLLTAGAKGKRFCLPNSRVMIHQPLGGFQGQATDIEIHAKEILKVKSRMNELMAYHTGKSLEEIERDTERDRFLSAEQSVEYGLVDSVFTRRD</sequence>
<protein>
    <recommendedName>
        <fullName evidence="1">ATP-dependent Clp protease proteolytic subunit</fullName>
        <ecNumber evidence="1">3.4.21.92</ecNumber>
    </recommendedName>
    <alternativeName>
        <fullName evidence="1">Endopeptidase Clp</fullName>
    </alternativeName>
</protein>
<keyword id="KW-0963">Cytoplasm</keyword>
<keyword id="KW-0378">Hydrolase</keyword>
<keyword id="KW-0645">Protease</keyword>
<keyword id="KW-0720">Serine protease</keyword>
<dbReference type="EC" id="3.4.21.92" evidence="1"/>
<dbReference type="EMBL" id="CP000668">
    <property type="protein sequence ID" value="ABP41155.1"/>
    <property type="molecule type" value="Genomic_DNA"/>
</dbReference>
<dbReference type="RefSeq" id="WP_002208642.1">
    <property type="nucleotide sequence ID" value="NZ_CP009715.1"/>
</dbReference>
<dbReference type="SMR" id="A4TPE3"/>
<dbReference type="MEROPS" id="S14.001"/>
<dbReference type="GeneID" id="96664465"/>
<dbReference type="KEGG" id="ypp:YPDSF_2793"/>
<dbReference type="PATRIC" id="fig|386656.14.peg.50"/>
<dbReference type="GO" id="GO:0005737">
    <property type="term" value="C:cytoplasm"/>
    <property type="evidence" value="ECO:0007669"/>
    <property type="project" value="UniProtKB-SubCell"/>
</dbReference>
<dbReference type="GO" id="GO:0009368">
    <property type="term" value="C:endopeptidase Clp complex"/>
    <property type="evidence" value="ECO:0007669"/>
    <property type="project" value="TreeGrafter"/>
</dbReference>
<dbReference type="GO" id="GO:0004176">
    <property type="term" value="F:ATP-dependent peptidase activity"/>
    <property type="evidence" value="ECO:0007669"/>
    <property type="project" value="InterPro"/>
</dbReference>
<dbReference type="GO" id="GO:0051117">
    <property type="term" value="F:ATPase binding"/>
    <property type="evidence" value="ECO:0007669"/>
    <property type="project" value="TreeGrafter"/>
</dbReference>
<dbReference type="GO" id="GO:0004252">
    <property type="term" value="F:serine-type endopeptidase activity"/>
    <property type="evidence" value="ECO:0007669"/>
    <property type="project" value="UniProtKB-UniRule"/>
</dbReference>
<dbReference type="GO" id="GO:0006515">
    <property type="term" value="P:protein quality control for misfolded or incompletely synthesized proteins"/>
    <property type="evidence" value="ECO:0007669"/>
    <property type="project" value="TreeGrafter"/>
</dbReference>
<dbReference type="CDD" id="cd07017">
    <property type="entry name" value="S14_ClpP_2"/>
    <property type="match status" value="1"/>
</dbReference>
<dbReference type="FunFam" id="3.90.226.10:FF:000001">
    <property type="entry name" value="ATP-dependent Clp protease proteolytic subunit"/>
    <property type="match status" value="1"/>
</dbReference>
<dbReference type="Gene3D" id="3.90.226.10">
    <property type="entry name" value="2-enoyl-CoA Hydratase, Chain A, domain 1"/>
    <property type="match status" value="1"/>
</dbReference>
<dbReference type="HAMAP" id="MF_00444">
    <property type="entry name" value="ClpP"/>
    <property type="match status" value="1"/>
</dbReference>
<dbReference type="InterPro" id="IPR001907">
    <property type="entry name" value="ClpP"/>
</dbReference>
<dbReference type="InterPro" id="IPR029045">
    <property type="entry name" value="ClpP/crotonase-like_dom_sf"/>
</dbReference>
<dbReference type="InterPro" id="IPR023562">
    <property type="entry name" value="ClpP/TepA"/>
</dbReference>
<dbReference type="InterPro" id="IPR033135">
    <property type="entry name" value="ClpP_His_AS"/>
</dbReference>
<dbReference type="InterPro" id="IPR018215">
    <property type="entry name" value="ClpP_Ser_AS"/>
</dbReference>
<dbReference type="NCBIfam" id="TIGR00493">
    <property type="entry name" value="clpP"/>
    <property type="match status" value="1"/>
</dbReference>
<dbReference type="NCBIfam" id="NF001368">
    <property type="entry name" value="PRK00277.1"/>
    <property type="match status" value="1"/>
</dbReference>
<dbReference type="NCBIfam" id="NF009205">
    <property type="entry name" value="PRK12553.1"/>
    <property type="match status" value="1"/>
</dbReference>
<dbReference type="PANTHER" id="PTHR10381">
    <property type="entry name" value="ATP-DEPENDENT CLP PROTEASE PROTEOLYTIC SUBUNIT"/>
    <property type="match status" value="1"/>
</dbReference>
<dbReference type="PANTHER" id="PTHR10381:SF70">
    <property type="entry name" value="ATP-DEPENDENT CLP PROTEASE PROTEOLYTIC SUBUNIT"/>
    <property type="match status" value="1"/>
</dbReference>
<dbReference type="Pfam" id="PF00574">
    <property type="entry name" value="CLP_protease"/>
    <property type="match status" value="1"/>
</dbReference>
<dbReference type="PRINTS" id="PR00127">
    <property type="entry name" value="CLPPROTEASEP"/>
</dbReference>
<dbReference type="SUPFAM" id="SSF52096">
    <property type="entry name" value="ClpP/crotonase"/>
    <property type="match status" value="1"/>
</dbReference>
<dbReference type="PROSITE" id="PS00382">
    <property type="entry name" value="CLP_PROTEASE_HIS"/>
    <property type="match status" value="1"/>
</dbReference>
<dbReference type="PROSITE" id="PS00381">
    <property type="entry name" value="CLP_PROTEASE_SER"/>
    <property type="match status" value="1"/>
</dbReference>
<feature type="chain" id="PRO_1000026148" description="ATP-dependent Clp protease proteolytic subunit">
    <location>
        <begin position="1"/>
        <end position="207"/>
    </location>
</feature>
<feature type="active site" description="Nucleophile" evidence="1">
    <location>
        <position position="111"/>
    </location>
</feature>
<feature type="active site" evidence="1">
    <location>
        <position position="136"/>
    </location>
</feature>
<organism>
    <name type="scientific">Yersinia pestis (strain Pestoides F)</name>
    <dbReference type="NCBI Taxonomy" id="386656"/>
    <lineage>
        <taxon>Bacteria</taxon>
        <taxon>Pseudomonadati</taxon>
        <taxon>Pseudomonadota</taxon>
        <taxon>Gammaproteobacteria</taxon>
        <taxon>Enterobacterales</taxon>
        <taxon>Yersiniaceae</taxon>
        <taxon>Yersinia</taxon>
    </lineage>
</organism>
<reference key="1">
    <citation type="submission" date="2007-02" db="EMBL/GenBank/DDBJ databases">
        <title>Complete sequence of chromosome of Yersinia pestis Pestoides F.</title>
        <authorList>
            <consortium name="US DOE Joint Genome Institute"/>
            <person name="Copeland A."/>
            <person name="Lucas S."/>
            <person name="Lapidus A."/>
            <person name="Barry K."/>
            <person name="Detter J.C."/>
            <person name="Glavina del Rio T."/>
            <person name="Hammon N."/>
            <person name="Israni S."/>
            <person name="Dalin E."/>
            <person name="Tice H."/>
            <person name="Pitluck S."/>
            <person name="Di Bartolo G."/>
            <person name="Chain P."/>
            <person name="Malfatti S."/>
            <person name="Shin M."/>
            <person name="Vergez L."/>
            <person name="Schmutz J."/>
            <person name="Larimer F."/>
            <person name="Land M."/>
            <person name="Hauser L."/>
            <person name="Worsham P."/>
            <person name="Chu M."/>
            <person name="Bearden S."/>
            <person name="Garcia E."/>
            <person name="Richardson P."/>
        </authorList>
    </citation>
    <scope>NUCLEOTIDE SEQUENCE [LARGE SCALE GENOMIC DNA]</scope>
    <source>
        <strain>Pestoides F</strain>
    </source>
</reference>
<comment type="function">
    <text evidence="1">Cleaves peptides in various proteins in a process that requires ATP hydrolysis. Has a chymotrypsin-like activity. Plays a major role in the degradation of misfolded proteins.</text>
</comment>
<comment type="catalytic activity">
    <reaction evidence="1">
        <text>Hydrolysis of proteins to small peptides in the presence of ATP and magnesium. alpha-casein is the usual test substrate. In the absence of ATP, only oligopeptides shorter than five residues are hydrolyzed (such as succinyl-Leu-Tyr-|-NHMec, and Leu-Tyr-Leu-|-Tyr-Trp, in which cleavage of the -Tyr-|-Leu- and -Tyr-|-Trp bonds also occurs).</text>
        <dbReference type="EC" id="3.4.21.92"/>
    </reaction>
</comment>
<comment type="subunit">
    <text evidence="1">Fourteen ClpP subunits assemble into 2 heptameric rings which stack back to back to give a disk-like structure with a central cavity, resembling the structure of eukaryotic proteasomes.</text>
</comment>
<comment type="subcellular location">
    <subcellularLocation>
        <location evidence="1">Cytoplasm</location>
    </subcellularLocation>
</comment>
<comment type="similarity">
    <text evidence="1">Belongs to the peptidase S14 family.</text>
</comment>
<gene>
    <name evidence="1" type="primary">clpP</name>
    <name type="ordered locus">YPDSF_2793</name>
</gene>
<evidence type="ECO:0000255" key="1">
    <source>
        <dbReference type="HAMAP-Rule" id="MF_00444"/>
    </source>
</evidence>
<accession>A4TPE3</accession>